<proteinExistence type="inferred from homology"/>
<evidence type="ECO:0000255" key="1">
    <source>
        <dbReference type="HAMAP-Rule" id="MF_00818"/>
    </source>
</evidence>
<accession>Q7MSY1</accession>
<keyword id="KW-0963">Cytoplasm</keyword>
<keyword id="KW-0521">NADP</keyword>
<keyword id="KW-0560">Oxidoreductase</keyword>
<keyword id="KW-0671">Queuosine biosynthesis</keyword>
<keyword id="KW-1185">Reference proteome</keyword>
<reference key="1">
    <citation type="journal article" date="2003" name="Proc. Natl. Acad. Sci. U.S.A.">
        <title>Complete genome sequence and analysis of Wolinella succinogenes.</title>
        <authorList>
            <person name="Baar C."/>
            <person name="Eppinger M."/>
            <person name="Raddatz G."/>
            <person name="Simon J."/>
            <person name="Lanz C."/>
            <person name="Klimmek O."/>
            <person name="Nandakumar R."/>
            <person name="Gross R."/>
            <person name="Rosinus A."/>
            <person name="Keller H."/>
            <person name="Jagtap P."/>
            <person name="Linke B."/>
            <person name="Meyer F."/>
            <person name="Lederer H."/>
            <person name="Schuster S.C."/>
        </authorList>
    </citation>
    <scope>NUCLEOTIDE SEQUENCE [LARGE SCALE GENOMIC DNA]</scope>
    <source>
        <strain>ATCC 29543 / DSM 1740 / CCUG 13145 / JCM 31913 / LMG 7466 / NCTC 11488 / FDC 602W</strain>
    </source>
</reference>
<organism>
    <name type="scientific">Wolinella succinogenes (strain ATCC 29543 / DSM 1740 / CCUG 13145 / JCM 31913 / LMG 7466 / NCTC 11488 / FDC 602W)</name>
    <name type="common">Vibrio succinogenes</name>
    <dbReference type="NCBI Taxonomy" id="273121"/>
    <lineage>
        <taxon>Bacteria</taxon>
        <taxon>Pseudomonadati</taxon>
        <taxon>Campylobacterota</taxon>
        <taxon>Epsilonproteobacteria</taxon>
        <taxon>Campylobacterales</taxon>
        <taxon>Helicobacteraceae</taxon>
        <taxon>Wolinella</taxon>
    </lineage>
</organism>
<comment type="function">
    <text evidence="1">Catalyzes the NADPH-dependent reduction of 7-cyano-7-deazaguanine (preQ0) to 7-aminomethyl-7-deazaguanine (preQ1).</text>
</comment>
<comment type="catalytic activity">
    <reaction evidence="1">
        <text>7-aminomethyl-7-carbaguanine + 2 NADP(+) = 7-cyano-7-deazaguanine + 2 NADPH + 3 H(+)</text>
        <dbReference type="Rhea" id="RHEA:13409"/>
        <dbReference type="ChEBI" id="CHEBI:15378"/>
        <dbReference type="ChEBI" id="CHEBI:45075"/>
        <dbReference type="ChEBI" id="CHEBI:57783"/>
        <dbReference type="ChEBI" id="CHEBI:58349"/>
        <dbReference type="ChEBI" id="CHEBI:58703"/>
        <dbReference type="EC" id="1.7.1.13"/>
    </reaction>
</comment>
<comment type="pathway">
    <text evidence="1">tRNA modification; tRNA-queuosine biosynthesis.</text>
</comment>
<comment type="subcellular location">
    <subcellularLocation>
        <location evidence="1">Cytoplasm</location>
    </subcellularLocation>
</comment>
<comment type="similarity">
    <text evidence="1">Belongs to the GTP cyclohydrolase I family. QueF type 1 subfamily.</text>
</comment>
<feature type="chain" id="PRO_0000163016" description="NADPH-dependent 7-cyano-7-deazaguanine reductase">
    <location>
        <begin position="1"/>
        <end position="124"/>
    </location>
</feature>
<feature type="active site" description="Thioimide intermediate" evidence="1">
    <location>
        <position position="40"/>
    </location>
</feature>
<feature type="active site" description="Proton donor" evidence="1">
    <location>
        <position position="47"/>
    </location>
</feature>
<feature type="binding site" evidence="1">
    <location>
        <begin position="62"/>
        <end position="64"/>
    </location>
    <ligand>
        <name>substrate</name>
    </ligand>
</feature>
<feature type="binding site" evidence="1">
    <location>
        <begin position="81"/>
        <end position="82"/>
    </location>
    <ligand>
        <name>substrate</name>
    </ligand>
</feature>
<gene>
    <name evidence="1" type="primary">queF</name>
    <name type="ordered locus">WS0003</name>
</gene>
<protein>
    <recommendedName>
        <fullName evidence="1">NADPH-dependent 7-cyano-7-deazaguanine reductase</fullName>
        <ecNumber evidence="1">1.7.1.13</ecNumber>
    </recommendedName>
    <alternativeName>
        <fullName evidence="1">7-cyano-7-carbaguanine reductase</fullName>
    </alternativeName>
    <alternativeName>
        <fullName evidence="1">NADPH-dependent nitrile oxidoreductase</fullName>
    </alternativeName>
    <alternativeName>
        <fullName evidence="1">PreQ(0) reductase</fullName>
    </alternativeName>
</protein>
<sequence length="124" mass="14736">MRYGEMEVKNFNPEEIEVWPNRNDRHYTIKITLPEFSCLCPRSGYPDYATVYIEYVPSSLVVELKAIKLYINSFRDRHVSHEDSANEIYDLLYKKLSPKELYLKMDFNPRGNVHTIIEIDSKKN</sequence>
<name>QUEF_WOLSU</name>
<dbReference type="EC" id="1.7.1.13" evidence="1"/>
<dbReference type="EMBL" id="BX571657">
    <property type="protein sequence ID" value="CAE09177.1"/>
    <property type="molecule type" value="Genomic_DNA"/>
</dbReference>
<dbReference type="RefSeq" id="WP_011137977.1">
    <property type="nucleotide sequence ID" value="NC_005090.1"/>
</dbReference>
<dbReference type="SMR" id="Q7MSY1"/>
<dbReference type="STRING" id="273121.WS0003"/>
<dbReference type="KEGG" id="wsu:WS0003"/>
<dbReference type="eggNOG" id="COG0780">
    <property type="taxonomic scope" value="Bacteria"/>
</dbReference>
<dbReference type="HOGENOM" id="CLU_102489_1_1_7"/>
<dbReference type="UniPathway" id="UPA00392"/>
<dbReference type="Proteomes" id="UP000000422">
    <property type="component" value="Chromosome"/>
</dbReference>
<dbReference type="GO" id="GO:0005737">
    <property type="term" value="C:cytoplasm"/>
    <property type="evidence" value="ECO:0007669"/>
    <property type="project" value="UniProtKB-SubCell"/>
</dbReference>
<dbReference type="GO" id="GO:0033739">
    <property type="term" value="F:preQ1 synthase activity"/>
    <property type="evidence" value="ECO:0007669"/>
    <property type="project" value="UniProtKB-UniRule"/>
</dbReference>
<dbReference type="GO" id="GO:0008616">
    <property type="term" value="P:queuosine biosynthetic process"/>
    <property type="evidence" value="ECO:0007669"/>
    <property type="project" value="UniProtKB-UniRule"/>
</dbReference>
<dbReference type="GO" id="GO:0006400">
    <property type="term" value="P:tRNA modification"/>
    <property type="evidence" value="ECO:0007669"/>
    <property type="project" value="UniProtKB-UniRule"/>
</dbReference>
<dbReference type="Gene3D" id="3.30.1130.10">
    <property type="match status" value="1"/>
</dbReference>
<dbReference type="HAMAP" id="MF_00818">
    <property type="entry name" value="QueF_type1"/>
    <property type="match status" value="1"/>
</dbReference>
<dbReference type="InterPro" id="IPR043133">
    <property type="entry name" value="GTP-CH-I_C/QueF"/>
</dbReference>
<dbReference type="InterPro" id="IPR050084">
    <property type="entry name" value="NADPH_dep_7-cyano-7-deazaG_red"/>
</dbReference>
<dbReference type="InterPro" id="IPR029500">
    <property type="entry name" value="QueF"/>
</dbReference>
<dbReference type="InterPro" id="IPR016856">
    <property type="entry name" value="QueF_type1"/>
</dbReference>
<dbReference type="NCBIfam" id="TIGR03139">
    <property type="entry name" value="QueF-II"/>
    <property type="match status" value="1"/>
</dbReference>
<dbReference type="PANTHER" id="PTHR34354">
    <property type="entry name" value="NADPH-DEPENDENT 7-CYANO-7-DEAZAGUANINE REDUCTASE"/>
    <property type="match status" value="1"/>
</dbReference>
<dbReference type="PANTHER" id="PTHR34354:SF1">
    <property type="entry name" value="NADPH-DEPENDENT 7-CYANO-7-DEAZAGUANINE REDUCTASE"/>
    <property type="match status" value="1"/>
</dbReference>
<dbReference type="Pfam" id="PF14489">
    <property type="entry name" value="QueF"/>
    <property type="match status" value="1"/>
</dbReference>
<dbReference type="PIRSF" id="PIRSF027377">
    <property type="entry name" value="Nitrile_oxidored_QueF"/>
    <property type="match status" value="1"/>
</dbReference>
<dbReference type="SUPFAM" id="SSF55620">
    <property type="entry name" value="Tetrahydrobiopterin biosynthesis enzymes-like"/>
    <property type="match status" value="1"/>
</dbReference>